<sequence length="859" mass="102170">MEKEYSPKKIENYVQEFWKKNKTFEVKEDPKKEKYYCLPMLPYPSGKLHMGHVRNYTISDVISRYQRMLGKNVLQPMGWDAFGLPAEEAAIRNNTDPFSWTQKNIKYMKKQLQSLGFSYDWSREITTCHPEYYHWEQWFFTKLYEKKLVYKKNSLVNWCSYDKTVLANEQVIDGCCWRCQNKIRIKQIPQWFIKIRNYAESLYQDLKKLTHWPENVKNMQRNWIGRIKGFEITLNVFNTCQKLKVFTQRLDLLMGVTYISISSCHKLSINLSKKNELIKKFIKKYRYISQEEQYKVKYTGINTNLFVVHPITKKTIPIWISNATHIEYGTNAVLSIPGHNENDWNFAVKNNLKIKYVIFNPDHQEPKLYTSFLDIKGTLFNSQEFNGLNLKDGTEKIKKILYKKKILKEKINYKLQDWCISRQRYWGTPIPMAKFKNGKMIPIPENQLPVVLPKIRKNTNLLQQAINFNSKWAEIFIHGKHAIREIDTFDTFMESSWYYARYTCPNFNTGMIDSIASKYWLPVDQYIGGIEHAIMHLMYFRFYHKLLRDFKLVDFDEPVKNLLCQGMVLSEAFYKIDSNSQRKWFNSSSVLIKRNTKGEIIESHTQKGEKLIYAGMIKMSKSKNNGIEPELIIQRYGADTIRLFIMFSAPVESDLEWKESGLKGIYRFLKKLWMLIFNYIDIKNTHKKINFDFLNHQQSELRYQLHKTIAKVSDDIGRRQTFNTAISEIMKLVNQLSKAPIKEEQDKSIMRESLICIIKMLYPFTPHFCFFVWNYFNNHSSIDNEKWPIFQKDILSKKYSTIVAQINGKKRCATKISDSLTKEEIFLYIQNQPIIKKYLEDVDIKKIIYIPKKIINFVT</sequence>
<feature type="chain" id="PRO_0000151987" description="Leucine--tRNA ligase">
    <location>
        <begin position="1"/>
        <end position="859"/>
    </location>
</feature>
<feature type="short sequence motif" description="'HIGH' region">
    <location>
        <begin position="42"/>
        <end position="52"/>
    </location>
</feature>
<feature type="short sequence motif" description="'KMSKS' region">
    <location>
        <begin position="618"/>
        <end position="622"/>
    </location>
</feature>
<feature type="binding site" evidence="1">
    <location>
        <position position="621"/>
    </location>
    <ligand>
        <name>ATP</name>
        <dbReference type="ChEBI" id="CHEBI:30616"/>
    </ligand>
</feature>
<dbReference type="EC" id="6.1.1.4" evidence="1"/>
<dbReference type="EMBL" id="BA000003">
    <property type="protein sequence ID" value="BAB13142.1"/>
    <property type="molecule type" value="Genomic_DNA"/>
</dbReference>
<dbReference type="RefSeq" id="NP_240256.1">
    <property type="nucleotide sequence ID" value="NC_002528.1"/>
</dbReference>
<dbReference type="RefSeq" id="WP_010896120.1">
    <property type="nucleotide sequence ID" value="NC_002528.1"/>
</dbReference>
<dbReference type="SMR" id="P57519"/>
<dbReference type="STRING" id="563178.BUAP5A_437"/>
<dbReference type="EnsemblBacteria" id="BAB13142">
    <property type="protein sequence ID" value="BAB13142"/>
    <property type="gene ID" value="BAB13142"/>
</dbReference>
<dbReference type="KEGG" id="buc:BU444"/>
<dbReference type="PATRIC" id="fig|107806.10.peg.454"/>
<dbReference type="eggNOG" id="COG0495">
    <property type="taxonomic scope" value="Bacteria"/>
</dbReference>
<dbReference type="HOGENOM" id="CLU_004427_0_0_6"/>
<dbReference type="Proteomes" id="UP000001806">
    <property type="component" value="Chromosome"/>
</dbReference>
<dbReference type="GO" id="GO:0005829">
    <property type="term" value="C:cytosol"/>
    <property type="evidence" value="ECO:0007669"/>
    <property type="project" value="TreeGrafter"/>
</dbReference>
<dbReference type="GO" id="GO:0002161">
    <property type="term" value="F:aminoacyl-tRNA deacylase activity"/>
    <property type="evidence" value="ECO:0007669"/>
    <property type="project" value="InterPro"/>
</dbReference>
<dbReference type="GO" id="GO:0005524">
    <property type="term" value="F:ATP binding"/>
    <property type="evidence" value="ECO:0007669"/>
    <property type="project" value="UniProtKB-UniRule"/>
</dbReference>
<dbReference type="GO" id="GO:0004823">
    <property type="term" value="F:leucine-tRNA ligase activity"/>
    <property type="evidence" value="ECO:0007669"/>
    <property type="project" value="UniProtKB-UniRule"/>
</dbReference>
<dbReference type="GO" id="GO:0006429">
    <property type="term" value="P:leucyl-tRNA aminoacylation"/>
    <property type="evidence" value="ECO:0007669"/>
    <property type="project" value="UniProtKB-UniRule"/>
</dbReference>
<dbReference type="CDD" id="cd07958">
    <property type="entry name" value="Anticodon_Ia_Leu_BEm"/>
    <property type="match status" value="1"/>
</dbReference>
<dbReference type="CDD" id="cd00812">
    <property type="entry name" value="LeuRS_core"/>
    <property type="match status" value="1"/>
</dbReference>
<dbReference type="FunFam" id="1.10.730.10:FF:000003">
    <property type="entry name" value="Leucine--tRNA ligase"/>
    <property type="match status" value="1"/>
</dbReference>
<dbReference type="FunFam" id="2.20.28.290:FF:000001">
    <property type="entry name" value="Leucine--tRNA ligase"/>
    <property type="match status" value="1"/>
</dbReference>
<dbReference type="FunFam" id="3.40.50.620:FF:000003">
    <property type="entry name" value="Leucine--tRNA ligase"/>
    <property type="match status" value="1"/>
</dbReference>
<dbReference type="Gene3D" id="2.20.28.290">
    <property type="match status" value="1"/>
</dbReference>
<dbReference type="Gene3D" id="3.10.20.590">
    <property type="match status" value="1"/>
</dbReference>
<dbReference type="Gene3D" id="3.40.50.620">
    <property type="entry name" value="HUPs"/>
    <property type="match status" value="2"/>
</dbReference>
<dbReference type="Gene3D" id="1.10.730.10">
    <property type="entry name" value="Isoleucyl-tRNA Synthetase, Domain 1"/>
    <property type="match status" value="2"/>
</dbReference>
<dbReference type="HAMAP" id="MF_00049_B">
    <property type="entry name" value="Leu_tRNA_synth_B"/>
    <property type="match status" value="1"/>
</dbReference>
<dbReference type="InterPro" id="IPR001412">
    <property type="entry name" value="aa-tRNA-synth_I_CS"/>
</dbReference>
<dbReference type="InterPro" id="IPR002300">
    <property type="entry name" value="aa-tRNA-synth_Ia"/>
</dbReference>
<dbReference type="InterPro" id="IPR002302">
    <property type="entry name" value="Leu-tRNA-ligase"/>
</dbReference>
<dbReference type="InterPro" id="IPR025709">
    <property type="entry name" value="Leu_tRNA-synth_edit"/>
</dbReference>
<dbReference type="InterPro" id="IPR013155">
    <property type="entry name" value="M/V/L/I-tRNA-synth_anticd-bd"/>
</dbReference>
<dbReference type="InterPro" id="IPR015413">
    <property type="entry name" value="Methionyl/Leucyl_tRNA_Synth"/>
</dbReference>
<dbReference type="InterPro" id="IPR014729">
    <property type="entry name" value="Rossmann-like_a/b/a_fold"/>
</dbReference>
<dbReference type="InterPro" id="IPR009080">
    <property type="entry name" value="tRNAsynth_Ia_anticodon-bd"/>
</dbReference>
<dbReference type="InterPro" id="IPR009008">
    <property type="entry name" value="Val/Leu/Ile-tRNA-synth_edit"/>
</dbReference>
<dbReference type="NCBIfam" id="TIGR00396">
    <property type="entry name" value="leuS_bact"/>
    <property type="match status" value="1"/>
</dbReference>
<dbReference type="PANTHER" id="PTHR43740:SF2">
    <property type="entry name" value="LEUCINE--TRNA LIGASE, MITOCHONDRIAL"/>
    <property type="match status" value="1"/>
</dbReference>
<dbReference type="PANTHER" id="PTHR43740">
    <property type="entry name" value="LEUCYL-TRNA SYNTHETASE"/>
    <property type="match status" value="1"/>
</dbReference>
<dbReference type="Pfam" id="PF08264">
    <property type="entry name" value="Anticodon_1"/>
    <property type="match status" value="1"/>
</dbReference>
<dbReference type="Pfam" id="PF00133">
    <property type="entry name" value="tRNA-synt_1"/>
    <property type="match status" value="2"/>
</dbReference>
<dbReference type="Pfam" id="PF13603">
    <property type="entry name" value="tRNA-synt_1_2"/>
    <property type="match status" value="1"/>
</dbReference>
<dbReference type="Pfam" id="PF09334">
    <property type="entry name" value="tRNA-synt_1g"/>
    <property type="match status" value="1"/>
</dbReference>
<dbReference type="PRINTS" id="PR00985">
    <property type="entry name" value="TRNASYNTHLEU"/>
</dbReference>
<dbReference type="SUPFAM" id="SSF47323">
    <property type="entry name" value="Anticodon-binding domain of a subclass of class I aminoacyl-tRNA synthetases"/>
    <property type="match status" value="1"/>
</dbReference>
<dbReference type="SUPFAM" id="SSF52374">
    <property type="entry name" value="Nucleotidylyl transferase"/>
    <property type="match status" value="1"/>
</dbReference>
<dbReference type="SUPFAM" id="SSF50677">
    <property type="entry name" value="ValRS/IleRS/LeuRS editing domain"/>
    <property type="match status" value="1"/>
</dbReference>
<dbReference type="PROSITE" id="PS00178">
    <property type="entry name" value="AA_TRNA_LIGASE_I"/>
    <property type="match status" value="1"/>
</dbReference>
<evidence type="ECO:0000255" key="1">
    <source>
        <dbReference type="HAMAP-Rule" id="MF_00049"/>
    </source>
</evidence>
<protein>
    <recommendedName>
        <fullName evidence="1">Leucine--tRNA ligase</fullName>
        <ecNumber evidence="1">6.1.1.4</ecNumber>
    </recommendedName>
    <alternativeName>
        <fullName evidence="1">Leucyl-tRNA synthetase</fullName>
        <shortName evidence="1">LeuRS</shortName>
    </alternativeName>
</protein>
<name>SYL_BUCAI</name>
<gene>
    <name evidence="1" type="primary">leuS</name>
    <name type="ordered locus">BU444</name>
</gene>
<comment type="catalytic activity">
    <reaction evidence="1">
        <text>tRNA(Leu) + L-leucine + ATP = L-leucyl-tRNA(Leu) + AMP + diphosphate</text>
        <dbReference type="Rhea" id="RHEA:11688"/>
        <dbReference type="Rhea" id="RHEA-COMP:9613"/>
        <dbReference type="Rhea" id="RHEA-COMP:9622"/>
        <dbReference type="ChEBI" id="CHEBI:30616"/>
        <dbReference type="ChEBI" id="CHEBI:33019"/>
        <dbReference type="ChEBI" id="CHEBI:57427"/>
        <dbReference type="ChEBI" id="CHEBI:78442"/>
        <dbReference type="ChEBI" id="CHEBI:78494"/>
        <dbReference type="ChEBI" id="CHEBI:456215"/>
        <dbReference type="EC" id="6.1.1.4"/>
    </reaction>
</comment>
<comment type="subcellular location">
    <subcellularLocation>
        <location evidence="1">Cytoplasm</location>
    </subcellularLocation>
</comment>
<comment type="similarity">
    <text evidence="1">Belongs to the class-I aminoacyl-tRNA synthetase family.</text>
</comment>
<accession>P57519</accession>
<organism>
    <name type="scientific">Buchnera aphidicola subsp. Acyrthosiphon pisum (strain APS)</name>
    <name type="common">Acyrthosiphon pisum symbiotic bacterium</name>
    <dbReference type="NCBI Taxonomy" id="107806"/>
    <lineage>
        <taxon>Bacteria</taxon>
        <taxon>Pseudomonadati</taxon>
        <taxon>Pseudomonadota</taxon>
        <taxon>Gammaproteobacteria</taxon>
        <taxon>Enterobacterales</taxon>
        <taxon>Erwiniaceae</taxon>
        <taxon>Buchnera</taxon>
    </lineage>
</organism>
<keyword id="KW-0030">Aminoacyl-tRNA synthetase</keyword>
<keyword id="KW-0067">ATP-binding</keyword>
<keyword id="KW-0963">Cytoplasm</keyword>
<keyword id="KW-0436">Ligase</keyword>
<keyword id="KW-0547">Nucleotide-binding</keyword>
<keyword id="KW-0648">Protein biosynthesis</keyword>
<keyword id="KW-1185">Reference proteome</keyword>
<reference key="1">
    <citation type="journal article" date="2000" name="Nature">
        <title>Genome sequence of the endocellular bacterial symbiont of aphids Buchnera sp. APS.</title>
        <authorList>
            <person name="Shigenobu S."/>
            <person name="Watanabe H."/>
            <person name="Hattori M."/>
            <person name="Sakaki Y."/>
            <person name="Ishikawa H."/>
        </authorList>
    </citation>
    <scope>NUCLEOTIDE SEQUENCE [LARGE SCALE GENOMIC DNA]</scope>
    <source>
        <strain>APS</strain>
    </source>
</reference>
<proteinExistence type="inferred from homology"/>